<accession>C5A430</accession>
<proteinExistence type="inferred from homology"/>
<keyword id="KW-0378">Hydrolase</keyword>
<keyword id="KW-0546">Nucleotide metabolism</keyword>
<keyword id="KW-0547">Nucleotide-binding</keyword>
<keyword id="KW-1185">Reference proteome</keyword>
<sequence length="157" mass="17940">MMLPDWKIEKEILIEPFSKESLQPAGYDLRVGKEAYVEGKLIDVEEAGNVIIPPKKHALILTLERVKLPDDVMGDMKIRSSLAREGILGSFAWVDPGWDGNLTLMLFNASNEPVVLEYGERFVQIAFIRLEEPAKRPYRGNYQGSRRIALSKRRVRK</sequence>
<evidence type="ECO:0000255" key="1">
    <source>
        <dbReference type="HAMAP-Rule" id="MF_00146"/>
    </source>
</evidence>
<comment type="function">
    <text evidence="1">Catalyzes the deamination of dCTP to dUTP.</text>
</comment>
<comment type="catalytic activity">
    <reaction evidence="1">
        <text>dCTP + H2O + H(+) = dUTP + NH4(+)</text>
        <dbReference type="Rhea" id="RHEA:22680"/>
        <dbReference type="ChEBI" id="CHEBI:15377"/>
        <dbReference type="ChEBI" id="CHEBI:15378"/>
        <dbReference type="ChEBI" id="CHEBI:28938"/>
        <dbReference type="ChEBI" id="CHEBI:61481"/>
        <dbReference type="ChEBI" id="CHEBI:61555"/>
        <dbReference type="EC" id="3.5.4.13"/>
    </reaction>
</comment>
<comment type="pathway">
    <text evidence="1">Pyrimidine metabolism; dUMP biosynthesis; dUMP from dCTP (dUTP route): step 1/2.</text>
</comment>
<comment type="subunit">
    <text evidence="1">Homotrimer.</text>
</comment>
<comment type="similarity">
    <text evidence="1">Belongs to the dCTP deaminase family.</text>
</comment>
<organism>
    <name type="scientific">Thermococcus gammatolerans (strain DSM 15229 / JCM 11827 / EJ3)</name>
    <dbReference type="NCBI Taxonomy" id="593117"/>
    <lineage>
        <taxon>Archaea</taxon>
        <taxon>Methanobacteriati</taxon>
        <taxon>Methanobacteriota</taxon>
        <taxon>Thermococci</taxon>
        <taxon>Thermococcales</taxon>
        <taxon>Thermococcaceae</taxon>
        <taxon>Thermococcus</taxon>
    </lineage>
</organism>
<dbReference type="EC" id="3.5.4.13" evidence="1"/>
<dbReference type="EMBL" id="CP001398">
    <property type="protein sequence ID" value="ACS32992.1"/>
    <property type="molecule type" value="Genomic_DNA"/>
</dbReference>
<dbReference type="RefSeq" id="WP_015858110.1">
    <property type="nucleotide sequence ID" value="NC_012804.1"/>
</dbReference>
<dbReference type="SMR" id="C5A430"/>
<dbReference type="STRING" id="593117.TGAM_0490"/>
<dbReference type="PaxDb" id="593117-TGAM_0490"/>
<dbReference type="GeneID" id="7987358"/>
<dbReference type="KEGG" id="tga:TGAM_0490"/>
<dbReference type="PATRIC" id="fig|593117.10.peg.486"/>
<dbReference type="eggNOG" id="arCOG04048">
    <property type="taxonomic scope" value="Archaea"/>
</dbReference>
<dbReference type="HOGENOM" id="CLU_087476_3_1_2"/>
<dbReference type="OrthoDB" id="33242at2157"/>
<dbReference type="UniPathway" id="UPA00610">
    <property type="reaction ID" value="UER00665"/>
</dbReference>
<dbReference type="Proteomes" id="UP000001488">
    <property type="component" value="Chromosome"/>
</dbReference>
<dbReference type="GO" id="GO:0008829">
    <property type="term" value="F:dCTP deaminase activity"/>
    <property type="evidence" value="ECO:0007669"/>
    <property type="project" value="UniProtKB-UniRule"/>
</dbReference>
<dbReference type="GO" id="GO:0000166">
    <property type="term" value="F:nucleotide binding"/>
    <property type="evidence" value="ECO:0007669"/>
    <property type="project" value="UniProtKB-KW"/>
</dbReference>
<dbReference type="GO" id="GO:0006226">
    <property type="term" value="P:dUMP biosynthetic process"/>
    <property type="evidence" value="ECO:0007669"/>
    <property type="project" value="UniProtKB-UniPathway"/>
</dbReference>
<dbReference type="GO" id="GO:0006229">
    <property type="term" value="P:dUTP biosynthetic process"/>
    <property type="evidence" value="ECO:0007669"/>
    <property type="project" value="UniProtKB-UniRule"/>
</dbReference>
<dbReference type="CDD" id="cd07557">
    <property type="entry name" value="trimeric_dUTPase"/>
    <property type="match status" value="1"/>
</dbReference>
<dbReference type="Gene3D" id="2.70.40.10">
    <property type="match status" value="1"/>
</dbReference>
<dbReference type="HAMAP" id="MF_00146">
    <property type="entry name" value="dCTP_deaminase"/>
    <property type="match status" value="1"/>
</dbReference>
<dbReference type="InterPro" id="IPR011962">
    <property type="entry name" value="dCTP_deaminase"/>
</dbReference>
<dbReference type="InterPro" id="IPR036157">
    <property type="entry name" value="dUTPase-like_sf"/>
</dbReference>
<dbReference type="InterPro" id="IPR033704">
    <property type="entry name" value="dUTPase_trimeric"/>
</dbReference>
<dbReference type="NCBIfam" id="TIGR02274">
    <property type="entry name" value="dCTP_deam"/>
    <property type="match status" value="1"/>
</dbReference>
<dbReference type="PANTHER" id="PTHR42680">
    <property type="entry name" value="DCTP DEAMINASE"/>
    <property type="match status" value="1"/>
</dbReference>
<dbReference type="PANTHER" id="PTHR42680:SF3">
    <property type="entry name" value="DCTP DEAMINASE"/>
    <property type="match status" value="1"/>
</dbReference>
<dbReference type="Pfam" id="PF22769">
    <property type="entry name" value="DCD"/>
    <property type="match status" value="1"/>
</dbReference>
<dbReference type="SUPFAM" id="SSF51283">
    <property type="entry name" value="dUTPase-like"/>
    <property type="match status" value="1"/>
</dbReference>
<reference key="1">
    <citation type="journal article" date="2007" name="Genome Biol.">
        <title>Genome analysis and genome-wide proteomics of Thermococcus gammatolerans, the most radioresistant organism known amongst the Archaea.</title>
        <authorList>
            <person name="Zivanovic Y."/>
            <person name="Armengaud J."/>
            <person name="Lagorce A."/>
            <person name="Leplat C."/>
            <person name="Guerin P."/>
            <person name="Dutertre M."/>
            <person name="Anthouard V."/>
            <person name="Forterre P."/>
            <person name="Wincker P."/>
            <person name="Confalonieri F."/>
        </authorList>
    </citation>
    <scope>NUCLEOTIDE SEQUENCE [LARGE SCALE GENOMIC DNA]</scope>
    <source>
        <strain>DSM 15229 / JCM 11827 / EJ3</strain>
    </source>
</reference>
<name>DCD_THEGJ</name>
<feature type="chain" id="PRO_1000203368" description="dCTP deaminase">
    <location>
        <begin position="1"/>
        <end position="157"/>
    </location>
</feature>
<feature type="binding site" evidence="1">
    <location>
        <begin position="79"/>
        <end position="84"/>
    </location>
    <ligand>
        <name>dCTP</name>
        <dbReference type="ChEBI" id="CHEBI:61481"/>
    </ligand>
</feature>
<feature type="binding site" evidence="1">
    <location>
        <position position="95"/>
    </location>
    <ligand>
        <name>dCTP</name>
        <dbReference type="ChEBI" id="CHEBI:61481"/>
    </ligand>
</feature>
<feature type="binding site" evidence="1">
    <location>
        <position position="124"/>
    </location>
    <ligand>
        <name>dCTP</name>
        <dbReference type="ChEBI" id="CHEBI:61481"/>
    </ligand>
</feature>
<feature type="binding site" evidence="1">
    <location>
        <position position="138"/>
    </location>
    <ligand>
        <name>dCTP</name>
        <dbReference type="ChEBI" id="CHEBI:61481"/>
    </ligand>
</feature>
<gene>
    <name evidence="1" type="primary">dcd</name>
    <name type="ordered locus">TGAM_0490</name>
</gene>
<protein>
    <recommendedName>
        <fullName evidence="1">dCTP deaminase</fullName>
        <ecNumber evidence="1">3.5.4.13</ecNumber>
    </recommendedName>
    <alternativeName>
        <fullName evidence="1">Deoxycytidine triphosphate deaminase</fullName>
    </alternativeName>
</protein>